<dbReference type="EC" id="4.2.1.20" evidence="1"/>
<dbReference type="EMBL" id="CP000948">
    <property type="protein sequence ID" value="ACB02479.1"/>
    <property type="molecule type" value="Genomic_DNA"/>
</dbReference>
<dbReference type="RefSeq" id="WP_000443067.1">
    <property type="nucleotide sequence ID" value="NC_010473.1"/>
</dbReference>
<dbReference type="SMR" id="B1XBK9"/>
<dbReference type="GeneID" id="75171374"/>
<dbReference type="KEGG" id="ecd:ECDH10B_1375"/>
<dbReference type="HOGENOM" id="CLU_016734_0_4_6"/>
<dbReference type="UniPathway" id="UPA00035">
    <property type="reaction ID" value="UER00044"/>
</dbReference>
<dbReference type="GO" id="GO:0005829">
    <property type="term" value="C:cytosol"/>
    <property type="evidence" value="ECO:0007669"/>
    <property type="project" value="TreeGrafter"/>
</dbReference>
<dbReference type="GO" id="GO:0004834">
    <property type="term" value="F:tryptophan synthase activity"/>
    <property type="evidence" value="ECO:0007669"/>
    <property type="project" value="UniProtKB-UniRule"/>
</dbReference>
<dbReference type="CDD" id="cd04724">
    <property type="entry name" value="Tryptophan_synthase_alpha"/>
    <property type="match status" value="1"/>
</dbReference>
<dbReference type="FunFam" id="3.20.20.70:FF:000037">
    <property type="entry name" value="Tryptophan synthase alpha chain"/>
    <property type="match status" value="1"/>
</dbReference>
<dbReference type="Gene3D" id="3.20.20.70">
    <property type="entry name" value="Aldolase class I"/>
    <property type="match status" value="1"/>
</dbReference>
<dbReference type="HAMAP" id="MF_00131">
    <property type="entry name" value="Trp_synth_alpha"/>
    <property type="match status" value="1"/>
</dbReference>
<dbReference type="InterPro" id="IPR013785">
    <property type="entry name" value="Aldolase_TIM"/>
</dbReference>
<dbReference type="InterPro" id="IPR011060">
    <property type="entry name" value="RibuloseP-bd_barrel"/>
</dbReference>
<dbReference type="InterPro" id="IPR018204">
    <property type="entry name" value="Trp_synthase_alpha_AS"/>
</dbReference>
<dbReference type="InterPro" id="IPR002028">
    <property type="entry name" value="Trp_synthase_suA"/>
</dbReference>
<dbReference type="NCBIfam" id="TIGR00262">
    <property type="entry name" value="trpA"/>
    <property type="match status" value="1"/>
</dbReference>
<dbReference type="PANTHER" id="PTHR43406:SF1">
    <property type="entry name" value="TRYPTOPHAN SYNTHASE ALPHA CHAIN, CHLOROPLASTIC"/>
    <property type="match status" value="1"/>
</dbReference>
<dbReference type="PANTHER" id="PTHR43406">
    <property type="entry name" value="TRYPTOPHAN SYNTHASE, ALPHA CHAIN"/>
    <property type="match status" value="1"/>
</dbReference>
<dbReference type="Pfam" id="PF00290">
    <property type="entry name" value="Trp_syntA"/>
    <property type="match status" value="1"/>
</dbReference>
<dbReference type="SUPFAM" id="SSF51366">
    <property type="entry name" value="Ribulose-phoshate binding barrel"/>
    <property type="match status" value="1"/>
</dbReference>
<dbReference type="PROSITE" id="PS00167">
    <property type="entry name" value="TRP_SYNTHASE_ALPHA"/>
    <property type="match status" value="1"/>
</dbReference>
<gene>
    <name evidence="1" type="primary">trpA</name>
    <name type="ordered locus">ECDH10B_1375</name>
</gene>
<reference key="1">
    <citation type="journal article" date="2008" name="J. Bacteriol.">
        <title>The complete genome sequence of Escherichia coli DH10B: insights into the biology of a laboratory workhorse.</title>
        <authorList>
            <person name="Durfee T."/>
            <person name="Nelson R."/>
            <person name="Baldwin S."/>
            <person name="Plunkett G. III"/>
            <person name="Burland V."/>
            <person name="Mau B."/>
            <person name="Petrosino J.F."/>
            <person name="Qin X."/>
            <person name="Muzny D.M."/>
            <person name="Ayele M."/>
            <person name="Gibbs R.A."/>
            <person name="Csorgo B."/>
            <person name="Posfai G."/>
            <person name="Weinstock G.M."/>
            <person name="Blattner F.R."/>
        </authorList>
    </citation>
    <scope>NUCLEOTIDE SEQUENCE [LARGE SCALE GENOMIC DNA]</scope>
    <source>
        <strain>K12 / DH10B</strain>
    </source>
</reference>
<accession>B1XBK9</accession>
<proteinExistence type="inferred from homology"/>
<evidence type="ECO:0000255" key="1">
    <source>
        <dbReference type="HAMAP-Rule" id="MF_00131"/>
    </source>
</evidence>
<keyword id="KW-0028">Amino-acid biosynthesis</keyword>
<keyword id="KW-0057">Aromatic amino acid biosynthesis</keyword>
<keyword id="KW-0456">Lyase</keyword>
<keyword id="KW-0822">Tryptophan biosynthesis</keyword>
<name>TRPA_ECODH</name>
<protein>
    <recommendedName>
        <fullName evidence="1">Tryptophan synthase alpha chain</fullName>
        <ecNumber evidence="1">4.2.1.20</ecNumber>
    </recommendedName>
</protein>
<organism>
    <name type="scientific">Escherichia coli (strain K12 / DH10B)</name>
    <dbReference type="NCBI Taxonomy" id="316385"/>
    <lineage>
        <taxon>Bacteria</taxon>
        <taxon>Pseudomonadati</taxon>
        <taxon>Pseudomonadota</taxon>
        <taxon>Gammaproteobacteria</taxon>
        <taxon>Enterobacterales</taxon>
        <taxon>Enterobacteriaceae</taxon>
        <taxon>Escherichia</taxon>
    </lineage>
</organism>
<sequence>MERYESLFAQLKERKEGAFVPFVTLGDPGIEQSLKIIDTLIEAGADALELGIPFSDPLADGPTIQNATLRAFAAGVTPAQCFEMLALIRQKHPTIPIGLLMYANLVFNKGIDEFYAQCEKVGVDSVLVADVPVEESAPFRQAALRHNVAPIFICPPNADDDLLRQIASYGRGYTYLLSRAGVTGAENRAALPLNHLVAKLKEYNAAPPLQGFGISAPDQVKAAIDAGAAGAISGSAIVKIIEQHINEPEKMLAALKVFVQPMKAATRS</sequence>
<comment type="function">
    <text evidence="1">The alpha subunit is responsible for the aldol cleavage of indoleglycerol phosphate to indole and glyceraldehyde 3-phosphate.</text>
</comment>
<comment type="catalytic activity">
    <reaction evidence="1">
        <text>(1S,2R)-1-C-(indol-3-yl)glycerol 3-phosphate + L-serine = D-glyceraldehyde 3-phosphate + L-tryptophan + H2O</text>
        <dbReference type="Rhea" id="RHEA:10532"/>
        <dbReference type="ChEBI" id="CHEBI:15377"/>
        <dbReference type="ChEBI" id="CHEBI:33384"/>
        <dbReference type="ChEBI" id="CHEBI:57912"/>
        <dbReference type="ChEBI" id="CHEBI:58866"/>
        <dbReference type="ChEBI" id="CHEBI:59776"/>
        <dbReference type="EC" id="4.2.1.20"/>
    </reaction>
</comment>
<comment type="pathway">
    <text evidence="1">Amino-acid biosynthesis; L-tryptophan biosynthesis; L-tryptophan from chorismate: step 5/5.</text>
</comment>
<comment type="subunit">
    <text evidence="1">Tetramer of two alpha and two beta chains.</text>
</comment>
<comment type="similarity">
    <text evidence="1">Belongs to the TrpA family.</text>
</comment>
<feature type="chain" id="PRO_1000095714" description="Tryptophan synthase alpha chain">
    <location>
        <begin position="1"/>
        <end position="268"/>
    </location>
</feature>
<feature type="active site" description="Proton acceptor" evidence="1">
    <location>
        <position position="49"/>
    </location>
</feature>
<feature type="active site" description="Proton acceptor" evidence="1">
    <location>
        <position position="60"/>
    </location>
</feature>